<sequence length="445" mass="49300">METILQHVPVGQKVGIAFSGGLDTSAALRWMKNKGALPYAYTANLGQPDEEDYDAIPRKALEYGAEKARLIDCRPQLANEGIAAIQAGAFHISTGGITYFNTTPLGRAVTGTMLVAAMKEDDVHIWGDGSTFKGNDIERFYRYGLLTNPALKIYKPWLDQTFIDELGGRAEMSAFMTKEGFGYKMSAEKAYSTDSNMLGATHEAKDLEHLNSGIRIVNPIMGVAFWKPEVEVKAEEVSITFDEGRPVAVNGREIADPVEMFLELNRIGGRHGLGMSDQIENRIIEAKSRGIYEAPGMALLHIAYERLVTGIHNEDTIEQYRINGLRLGRLLYQGRWFDPQAIMLRETAQRWVARAVTGTVTLELRRGNDYSILNTESPNLTYAPERLSMEKVEDAPFSPADRIGQLTMRNLDLMDTRDKLAIYSKAGLLSLGTSSALPQLGGDKK</sequence>
<dbReference type="EC" id="6.3.4.5"/>
<dbReference type="EMBL" id="AL646052">
    <property type="protein sequence ID" value="CAD16260.1"/>
    <property type="molecule type" value="Genomic_DNA"/>
</dbReference>
<dbReference type="RefSeq" id="WP_011002468.1">
    <property type="nucleotide sequence ID" value="NC_003295.1"/>
</dbReference>
<dbReference type="SMR" id="Q8XWC1"/>
<dbReference type="STRING" id="267608.RSc2553"/>
<dbReference type="EnsemblBacteria" id="CAD16260">
    <property type="protein sequence ID" value="CAD16260"/>
    <property type="gene ID" value="RSc2553"/>
</dbReference>
<dbReference type="KEGG" id="rso:RSc2553"/>
<dbReference type="eggNOG" id="COG0137">
    <property type="taxonomic scope" value="Bacteria"/>
</dbReference>
<dbReference type="HOGENOM" id="CLU_032784_4_1_4"/>
<dbReference type="UniPathway" id="UPA00068">
    <property type="reaction ID" value="UER00113"/>
</dbReference>
<dbReference type="Proteomes" id="UP000001436">
    <property type="component" value="Chromosome"/>
</dbReference>
<dbReference type="GO" id="GO:0005737">
    <property type="term" value="C:cytoplasm"/>
    <property type="evidence" value="ECO:0007669"/>
    <property type="project" value="UniProtKB-SubCell"/>
</dbReference>
<dbReference type="GO" id="GO:0004055">
    <property type="term" value="F:argininosuccinate synthase activity"/>
    <property type="evidence" value="ECO:0007669"/>
    <property type="project" value="UniProtKB-UniRule"/>
</dbReference>
<dbReference type="GO" id="GO:0005524">
    <property type="term" value="F:ATP binding"/>
    <property type="evidence" value="ECO:0007669"/>
    <property type="project" value="UniProtKB-UniRule"/>
</dbReference>
<dbReference type="GO" id="GO:0042803">
    <property type="term" value="F:protein homodimerization activity"/>
    <property type="evidence" value="ECO:0007669"/>
    <property type="project" value="InterPro"/>
</dbReference>
<dbReference type="GO" id="GO:0000053">
    <property type="term" value="P:argininosuccinate metabolic process"/>
    <property type="evidence" value="ECO:0007669"/>
    <property type="project" value="TreeGrafter"/>
</dbReference>
<dbReference type="GO" id="GO:0006526">
    <property type="term" value="P:L-arginine biosynthetic process"/>
    <property type="evidence" value="ECO:0007669"/>
    <property type="project" value="UniProtKB-UniRule"/>
</dbReference>
<dbReference type="GO" id="GO:0000050">
    <property type="term" value="P:urea cycle"/>
    <property type="evidence" value="ECO:0007669"/>
    <property type="project" value="TreeGrafter"/>
</dbReference>
<dbReference type="CDD" id="cd01999">
    <property type="entry name" value="ASS"/>
    <property type="match status" value="1"/>
</dbReference>
<dbReference type="FunFam" id="1.10.287.400:FF:000001">
    <property type="entry name" value="Argininosuccinate synthase"/>
    <property type="match status" value="1"/>
</dbReference>
<dbReference type="Gene3D" id="1.10.287.400">
    <property type="match status" value="1"/>
</dbReference>
<dbReference type="Gene3D" id="3.90.1260.10">
    <property type="entry name" value="Argininosuccinate synthetase, chain A, domain 2"/>
    <property type="match status" value="1"/>
</dbReference>
<dbReference type="Gene3D" id="3.40.50.620">
    <property type="entry name" value="HUPs"/>
    <property type="match status" value="1"/>
</dbReference>
<dbReference type="HAMAP" id="MF_00581">
    <property type="entry name" value="Arg_succ_synth_type2"/>
    <property type="match status" value="1"/>
</dbReference>
<dbReference type="InterPro" id="IPR023437">
    <property type="entry name" value="Arg_succ_synth_type2_subfam"/>
</dbReference>
<dbReference type="InterPro" id="IPR048268">
    <property type="entry name" value="Arginosuc_syn_C"/>
</dbReference>
<dbReference type="InterPro" id="IPR048267">
    <property type="entry name" value="Arginosuc_syn_N"/>
</dbReference>
<dbReference type="InterPro" id="IPR001518">
    <property type="entry name" value="Arginosuc_synth"/>
</dbReference>
<dbReference type="InterPro" id="IPR018223">
    <property type="entry name" value="Arginosuc_synth_CS"/>
</dbReference>
<dbReference type="InterPro" id="IPR023434">
    <property type="entry name" value="Arginosuc_synth_type_1_subfam"/>
</dbReference>
<dbReference type="InterPro" id="IPR024074">
    <property type="entry name" value="AS_cat/multimer_dom_body"/>
</dbReference>
<dbReference type="InterPro" id="IPR024073">
    <property type="entry name" value="AS_multimer_C_tail"/>
</dbReference>
<dbReference type="InterPro" id="IPR014729">
    <property type="entry name" value="Rossmann-like_a/b/a_fold"/>
</dbReference>
<dbReference type="NCBIfam" id="TIGR00032">
    <property type="entry name" value="argG"/>
    <property type="match status" value="1"/>
</dbReference>
<dbReference type="NCBIfam" id="NF003779">
    <property type="entry name" value="PRK05370.1"/>
    <property type="match status" value="1"/>
</dbReference>
<dbReference type="PANTHER" id="PTHR11587">
    <property type="entry name" value="ARGININOSUCCINATE SYNTHASE"/>
    <property type="match status" value="1"/>
</dbReference>
<dbReference type="PANTHER" id="PTHR11587:SF2">
    <property type="entry name" value="ARGININOSUCCINATE SYNTHASE"/>
    <property type="match status" value="1"/>
</dbReference>
<dbReference type="Pfam" id="PF20979">
    <property type="entry name" value="Arginosuc_syn_C"/>
    <property type="match status" value="1"/>
</dbReference>
<dbReference type="Pfam" id="PF00764">
    <property type="entry name" value="Arginosuc_synth"/>
    <property type="match status" value="1"/>
</dbReference>
<dbReference type="SUPFAM" id="SSF52402">
    <property type="entry name" value="Adenine nucleotide alpha hydrolases-like"/>
    <property type="match status" value="1"/>
</dbReference>
<dbReference type="SUPFAM" id="SSF69864">
    <property type="entry name" value="Argininosuccinate synthetase, C-terminal domain"/>
    <property type="match status" value="1"/>
</dbReference>
<dbReference type="PROSITE" id="PS00564">
    <property type="entry name" value="ARGININOSUCCIN_SYN_1"/>
    <property type="match status" value="1"/>
</dbReference>
<dbReference type="PROSITE" id="PS00565">
    <property type="entry name" value="ARGININOSUCCIN_SYN_2"/>
    <property type="match status" value="1"/>
</dbReference>
<proteinExistence type="inferred from homology"/>
<comment type="catalytic activity">
    <reaction>
        <text>L-citrulline + L-aspartate + ATP = 2-(N(omega)-L-arginino)succinate + AMP + diphosphate + H(+)</text>
        <dbReference type="Rhea" id="RHEA:10932"/>
        <dbReference type="ChEBI" id="CHEBI:15378"/>
        <dbReference type="ChEBI" id="CHEBI:29991"/>
        <dbReference type="ChEBI" id="CHEBI:30616"/>
        <dbReference type="ChEBI" id="CHEBI:33019"/>
        <dbReference type="ChEBI" id="CHEBI:57472"/>
        <dbReference type="ChEBI" id="CHEBI:57743"/>
        <dbReference type="ChEBI" id="CHEBI:456215"/>
        <dbReference type="EC" id="6.3.4.5"/>
    </reaction>
</comment>
<comment type="pathway">
    <text>Amino-acid biosynthesis; L-arginine biosynthesis; L-arginine from L-ornithine and carbamoyl phosphate: step 2/3.</text>
</comment>
<comment type="subunit">
    <text evidence="1">Homotetramer.</text>
</comment>
<comment type="subcellular location">
    <subcellularLocation>
        <location evidence="1">Cytoplasm</location>
    </subcellularLocation>
</comment>
<comment type="similarity">
    <text evidence="2">Belongs to the argininosuccinate synthase family. Type 2 subfamily.</text>
</comment>
<name>ASSY_RALN1</name>
<organism>
    <name type="scientific">Ralstonia nicotianae (strain ATCC BAA-1114 / GMI1000)</name>
    <name type="common">Ralstonia solanacearum</name>
    <dbReference type="NCBI Taxonomy" id="267608"/>
    <lineage>
        <taxon>Bacteria</taxon>
        <taxon>Pseudomonadati</taxon>
        <taxon>Pseudomonadota</taxon>
        <taxon>Betaproteobacteria</taxon>
        <taxon>Burkholderiales</taxon>
        <taxon>Burkholderiaceae</taxon>
        <taxon>Ralstonia</taxon>
        <taxon>Ralstonia solanacearum species complex</taxon>
    </lineage>
</organism>
<gene>
    <name type="primary">argG</name>
    <name type="ordered locus">RSc2553</name>
    <name type="ORF">RS00732</name>
</gene>
<keyword id="KW-0028">Amino-acid biosynthesis</keyword>
<keyword id="KW-0055">Arginine biosynthesis</keyword>
<keyword id="KW-0067">ATP-binding</keyword>
<keyword id="KW-0963">Cytoplasm</keyword>
<keyword id="KW-0436">Ligase</keyword>
<keyword id="KW-0547">Nucleotide-binding</keyword>
<keyword id="KW-1185">Reference proteome</keyword>
<reference key="1">
    <citation type="journal article" date="2002" name="Nature">
        <title>Genome sequence of the plant pathogen Ralstonia solanacearum.</title>
        <authorList>
            <person name="Salanoubat M."/>
            <person name="Genin S."/>
            <person name="Artiguenave F."/>
            <person name="Gouzy J."/>
            <person name="Mangenot S."/>
            <person name="Arlat M."/>
            <person name="Billault A."/>
            <person name="Brottier P."/>
            <person name="Camus J.-C."/>
            <person name="Cattolico L."/>
            <person name="Chandler M."/>
            <person name="Choisne N."/>
            <person name="Claudel-Renard C."/>
            <person name="Cunnac S."/>
            <person name="Demange N."/>
            <person name="Gaspin C."/>
            <person name="Lavie M."/>
            <person name="Moisan A."/>
            <person name="Robert C."/>
            <person name="Saurin W."/>
            <person name="Schiex T."/>
            <person name="Siguier P."/>
            <person name="Thebault P."/>
            <person name="Whalen M."/>
            <person name="Wincker P."/>
            <person name="Levy M."/>
            <person name="Weissenbach J."/>
            <person name="Boucher C.A."/>
        </authorList>
    </citation>
    <scope>NUCLEOTIDE SEQUENCE [LARGE SCALE GENOMIC DNA]</scope>
    <source>
        <strain>ATCC BAA-1114 / GMI1000</strain>
    </source>
</reference>
<protein>
    <recommendedName>
        <fullName>Argininosuccinate synthase</fullName>
        <ecNumber>6.3.4.5</ecNumber>
    </recommendedName>
    <alternativeName>
        <fullName>Citrulline--aspartate ligase</fullName>
    </alternativeName>
</protein>
<accession>Q8XWC1</accession>
<feature type="chain" id="PRO_0000148704" description="Argininosuccinate synthase">
    <location>
        <begin position="1"/>
        <end position="445"/>
    </location>
</feature>
<feature type="binding site" evidence="1">
    <location>
        <begin position="17"/>
        <end position="25"/>
    </location>
    <ligand>
        <name>ATP</name>
        <dbReference type="ChEBI" id="CHEBI:30616"/>
    </ligand>
</feature>
<feature type="binding site" evidence="1">
    <location>
        <position position="43"/>
    </location>
    <ligand>
        <name>ATP</name>
        <dbReference type="ChEBI" id="CHEBI:30616"/>
    </ligand>
</feature>
<feature type="binding site" evidence="1">
    <location>
        <position position="99"/>
    </location>
    <ligand>
        <name>L-citrulline</name>
        <dbReference type="ChEBI" id="CHEBI:57743"/>
    </ligand>
</feature>
<feature type="binding site" evidence="1">
    <location>
        <position position="129"/>
    </location>
    <ligand>
        <name>ATP</name>
        <dbReference type="ChEBI" id="CHEBI:30616"/>
    </ligand>
</feature>
<feature type="binding site" evidence="1">
    <location>
        <position position="131"/>
    </location>
    <ligand>
        <name>ATP</name>
        <dbReference type="ChEBI" id="CHEBI:30616"/>
    </ligand>
</feature>
<feature type="binding site" evidence="1">
    <location>
        <position position="131"/>
    </location>
    <ligand>
        <name>L-aspartate</name>
        <dbReference type="ChEBI" id="CHEBI:29991"/>
    </ligand>
</feature>
<feature type="binding site" evidence="1">
    <location>
        <position position="135"/>
    </location>
    <ligand>
        <name>L-aspartate</name>
        <dbReference type="ChEBI" id="CHEBI:29991"/>
    </ligand>
</feature>
<feature type="binding site" evidence="1">
    <location>
        <position position="135"/>
    </location>
    <ligand>
        <name>L-citrulline</name>
        <dbReference type="ChEBI" id="CHEBI:57743"/>
    </ligand>
</feature>
<feature type="binding site" evidence="1">
    <location>
        <position position="136"/>
    </location>
    <ligand>
        <name>ATP</name>
        <dbReference type="ChEBI" id="CHEBI:30616"/>
    </ligand>
</feature>
<feature type="binding site" evidence="1">
    <location>
        <position position="136"/>
    </location>
    <ligand>
        <name>L-aspartate</name>
        <dbReference type="ChEBI" id="CHEBI:29991"/>
    </ligand>
</feature>
<feature type="binding site" evidence="1">
    <location>
        <position position="139"/>
    </location>
    <ligand>
        <name>L-citrulline</name>
        <dbReference type="ChEBI" id="CHEBI:57743"/>
    </ligand>
</feature>
<feature type="binding site" evidence="1">
    <location>
        <position position="192"/>
    </location>
    <ligand>
        <name>L-citrulline</name>
        <dbReference type="ChEBI" id="CHEBI:57743"/>
    </ligand>
</feature>
<feature type="binding site" evidence="1">
    <location>
        <position position="194"/>
    </location>
    <ligand>
        <name>ATP</name>
        <dbReference type="ChEBI" id="CHEBI:30616"/>
    </ligand>
</feature>
<feature type="binding site" evidence="1">
    <location>
        <position position="201"/>
    </location>
    <ligand>
        <name>L-citrulline</name>
        <dbReference type="ChEBI" id="CHEBI:57743"/>
    </ligand>
</feature>
<feature type="binding site" evidence="1">
    <location>
        <position position="203"/>
    </location>
    <ligand>
        <name>L-citrulline</name>
        <dbReference type="ChEBI" id="CHEBI:57743"/>
    </ligand>
</feature>
<feature type="binding site" evidence="1">
    <location>
        <position position="280"/>
    </location>
    <ligand>
        <name>L-citrulline</name>
        <dbReference type="ChEBI" id="CHEBI:57743"/>
    </ligand>
</feature>
<evidence type="ECO:0000250" key="1"/>
<evidence type="ECO:0000305" key="2"/>